<dbReference type="EC" id="6.3.4.2" evidence="1"/>
<dbReference type="EMBL" id="CP000687">
    <property type="protein sequence ID" value="ABY68741.1"/>
    <property type="molecule type" value="Genomic_DNA"/>
</dbReference>
<dbReference type="RefSeq" id="WP_005595836.1">
    <property type="nucleotide sequence ID" value="NC_010278.1"/>
</dbReference>
<dbReference type="SMR" id="B0BS41"/>
<dbReference type="MEROPS" id="C26.964"/>
<dbReference type="GeneID" id="48598283"/>
<dbReference type="KEGG" id="apj:APJL_0137"/>
<dbReference type="HOGENOM" id="CLU_011675_5_0_6"/>
<dbReference type="UniPathway" id="UPA00159">
    <property type="reaction ID" value="UER00277"/>
</dbReference>
<dbReference type="Proteomes" id="UP000008547">
    <property type="component" value="Chromosome"/>
</dbReference>
<dbReference type="GO" id="GO:0005829">
    <property type="term" value="C:cytosol"/>
    <property type="evidence" value="ECO:0007669"/>
    <property type="project" value="TreeGrafter"/>
</dbReference>
<dbReference type="GO" id="GO:0005524">
    <property type="term" value="F:ATP binding"/>
    <property type="evidence" value="ECO:0007669"/>
    <property type="project" value="UniProtKB-KW"/>
</dbReference>
<dbReference type="GO" id="GO:0003883">
    <property type="term" value="F:CTP synthase activity"/>
    <property type="evidence" value="ECO:0007669"/>
    <property type="project" value="UniProtKB-UniRule"/>
</dbReference>
<dbReference type="GO" id="GO:0004359">
    <property type="term" value="F:glutaminase activity"/>
    <property type="evidence" value="ECO:0007669"/>
    <property type="project" value="RHEA"/>
</dbReference>
<dbReference type="GO" id="GO:0042802">
    <property type="term" value="F:identical protein binding"/>
    <property type="evidence" value="ECO:0007669"/>
    <property type="project" value="TreeGrafter"/>
</dbReference>
<dbReference type="GO" id="GO:0046872">
    <property type="term" value="F:metal ion binding"/>
    <property type="evidence" value="ECO:0007669"/>
    <property type="project" value="UniProtKB-KW"/>
</dbReference>
<dbReference type="GO" id="GO:0044210">
    <property type="term" value="P:'de novo' CTP biosynthetic process"/>
    <property type="evidence" value="ECO:0007669"/>
    <property type="project" value="UniProtKB-UniRule"/>
</dbReference>
<dbReference type="GO" id="GO:0019856">
    <property type="term" value="P:pyrimidine nucleobase biosynthetic process"/>
    <property type="evidence" value="ECO:0007669"/>
    <property type="project" value="TreeGrafter"/>
</dbReference>
<dbReference type="CDD" id="cd03113">
    <property type="entry name" value="CTPS_N"/>
    <property type="match status" value="1"/>
</dbReference>
<dbReference type="CDD" id="cd01746">
    <property type="entry name" value="GATase1_CTP_Synthase"/>
    <property type="match status" value="1"/>
</dbReference>
<dbReference type="FunFam" id="3.40.50.300:FF:000009">
    <property type="entry name" value="CTP synthase"/>
    <property type="match status" value="1"/>
</dbReference>
<dbReference type="FunFam" id="3.40.50.880:FF:000002">
    <property type="entry name" value="CTP synthase"/>
    <property type="match status" value="1"/>
</dbReference>
<dbReference type="Gene3D" id="3.40.50.880">
    <property type="match status" value="1"/>
</dbReference>
<dbReference type="Gene3D" id="3.40.50.300">
    <property type="entry name" value="P-loop containing nucleotide triphosphate hydrolases"/>
    <property type="match status" value="1"/>
</dbReference>
<dbReference type="HAMAP" id="MF_01227">
    <property type="entry name" value="PyrG"/>
    <property type="match status" value="1"/>
</dbReference>
<dbReference type="InterPro" id="IPR029062">
    <property type="entry name" value="Class_I_gatase-like"/>
</dbReference>
<dbReference type="InterPro" id="IPR004468">
    <property type="entry name" value="CTP_synthase"/>
</dbReference>
<dbReference type="InterPro" id="IPR017456">
    <property type="entry name" value="CTP_synthase_N"/>
</dbReference>
<dbReference type="InterPro" id="IPR017926">
    <property type="entry name" value="GATASE"/>
</dbReference>
<dbReference type="InterPro" id="IPR033828">
    <property type="entry name" value="GATase1_CTP_Synthase"/>
</dbReference>
<dbReference type="InterPro" id="IPR027417">
    <property type="entry name" value="P-loop_NTPase"/>
</dbReference>
<dbReference type="NCBIfam" id="NF003792">
    <property type="entry name" value="PRK05380.1"/>
    <property type="match status" value="1"/>
</dbReference>
<dbReference type="NCBIfam" id="TIGR00337">
    <property type="entry name" value="PyrG"/>
    <property type="match status" value="1"/>
</dbReference>
<dbReference type="PANTHER" id="PTHR11550">
    <property type="entry name" value="CTP SYNTHASE"/>
    <property type="match status" value="1"/>
</dbReference>
<dbReference type="PANTHER" id="PTHR11550:SF0">
    <property type="entry name" value="CTP SYNTHASE-RELATED"/>
    <property type="match status" value="1"/>
</dbReference>
<dbReference type="Pfam" id="PF06418">
    <property type="entry name" value="CTP_synth_N"/>
    <property type="match status" value="1"/>
</dbReference>
<dbReference type="Pfam" id="PF00117">
    <property type="entry name" value="GATase"/>
    <property type="match status" value="1"/>
</dbReference>
<dbReference type="SUPFAM" id="SSF52317">
    <property type="entry name" value="Class I glutamine amidotransferase-like"/>
    <property type="match status" value="1"/>
</dbReference>
<dbReference type="SUPFAM" id="SSF52540">
    <property type="entry name" value="P-loop containing nucleoside triphosphate hydrolases"/>
    <property type="match status" value="1"/>
</dbReference>
<dbReference type="PROSITE" id="PS51273">
    <property type="entry name" value="GATASE_TYPE_1"/>
    <property type="match status" value="1"/>
</dbReference>
<protein>
    <recommendedName>
        <fullName evidence="1">CTP synthase</fullName>
        <ecNumber evidence="1">6.3.4.2</ecNumber>
    </recommendedName>
    <alternativeName>
        <fullName evidence="1">Cytidine 5'-triphosphate synthase</fullName>
    </alternativeName>
    <alternativeName>
        <fullName evidence="1">Cytidine triphosphate synthetase</fullName>
        <shortName evidence="1">CTP synthetase</shortName>
        <shortName evidence="1">CTPS</shortName>
    </alternativeName>
    <alternativeName>
        <fullName evidence="1">UTP--ammonia ligase</fullName>
    </alternativeName>
</protein>
<reference key="1">
    <citation type="journal article" date="2008" name="PLoS ONE">
        <title>Genome biology of Actinobacillus pleuropneumoniae JL03, an isolate of serotype 3 prevalent in China.</title>
        <authorList>
            <person name="Xu Z."/>
            <person name="Zhou Y."/>
            <person name="Li L."/>
            <person name="Zhou R."/>
            <person name="Xiao S."/>
            <person name="Wan Y."/>
            <person name="Zhang S."/>
            <person name="Wang K."/>
            <person name="Li W."/>
            <person name="Li L."/>
            <person name="Jin H."/>
            <person name="Kang M."/>
            <person name="Dalai B."/>
            <person name="Li T."/>
            <person name="Liu L."/>
            <person name="Cheng Y."/>
            <person name="Zhang L."/>
            <person name="Xu T."/>
            <person name="Zheng H."/>
            <person name="Pu S."/>
            <person name="Wang B."/>
            <person name="Gu W."/>
            <person name="Zhang X.L."/>
            <person name="Zhu G.-F."/>
            <person name="Wang S."/>
            <person name="Zhao G.-P."/>
            <person name="Chen H."/>
        </authorList>
    </citation>
    <scope>NUCLEOTIDE SEQUENCE [LARGE SCALE GENOMIC DNA]</scope>
    <source>
        <strain>JL03</strain>
    </source>
</reference>
<sequence>MATNYIFVTGGVVSSLGKGIAAASLASILEARGLNVTIMKLDPYINVDPGTMSPTQHGEVFVTQDGAETDLDLGHYERFIRSKMSKANNFTSGKIYSEVLRKERRGDYLGATIQVIPHITNEIKERVIEGGKGRDVVIVEVGGTVGDIESLPFLEALRQLAVDVGREKTLFMHLTLVPYIPTAGEVKTKPTQHSVKELLSIGIQPDVLICRSDRAIPSNERKKIALFCNVPERAVISLKDVDSIYRIPELLKSQGLDTFVCDRFRLDCPEADLSEWEQVLYRQANPTGEVTIGMVGKYVELPDAYKSVNEALKHAGLTNRLTVNIKYIDSQDIETKGVELLHGLDAILVPGGFGYRGVEGKIRTAQYARENKIPYLGICLGMQIALIEYARNVAGLTQANSSEFDKDCPQPVVGLITEWQDESGNVETRSDESDLGGTMRLGAQQCHLIEGTKAREVYGAETIVERHRHRYEVNNTLLPQIEAAGLKVSGLSADRKLVEIIEIPNHPWFIAAQFHPEFTSTPRDGHPLFAGFVKAAKDYQDSHKA</sequence>
<name>PYRG_ACTPJ</name>
<accession>B0BS41</accession>
<feature type="chain" id="PRO_1000139368" description="CTP synthase">
    <location>
        <begin position="1"/>
        <end position="545"/>
    </location>
</feature>
<feature type="domain" description="Glutamine amidotransferase type-1" evidence="1">
    <location>
        <begin position="291"/>
        <end position="542"/>
    </location>
</feature>
<feature type="region of interest" description="Amidoligase domain" evidence="1">
    <location>
        <begin position="1"/>
        <end position="266"/>
    </location>
</feature>
<feature type="active site" description="Nucleophile; for glutamine hydrolysis" evidence="1">
    <location>
        <position position="379"/>
    </location>
</feature>
<feature type="active site" evidence="1">
    <location>
        <position position="515"/>
    </location>
</feature>
<feature type="active site" evidence="1">
    <location>
        <position position="517"/>
    </location>
</feature>
<feature type="binding site" evidence="1">
    <location>
        <position position="14"/>
    </location>
    <ligand>
        <name>CTP</name>
        <dbReference type="ChEBI" id="CHEBI:37563"/>
        <note>allosteric inhibitor</note>
    </ligand>
</feature>
<feature type="binding site" evidence="1">
    <location>
        <position position="14"/>
    </location>
    <ligand>
        <name>UTP</name>
        <dbReference type="ChEBI" id="CHEBI:46398"/>
    </ligand>
</feature>
<feature type="binding site" evidence="1">
    <location>
        <begin position="15"/>
        <end position="20"/>
    </location>
    <ligand>
        <name>ATP</name>
        <dbReference type="ChEBI" id="CHEBI:30616"/>
    </ligand>
</feature>
<feature type="binding site" evidence="1">
    <location>
        <position position="72"/>
    </location>
    <ligand>
        <name>ATP</name>
        <dbReference type="ChEBI" id="CHEBI:30616"/>
    </ligand>
</feature>
<feature type="binding site" evidence="1">
    <location>
        <position position="72"/>
    </location>
    <ligand>
        <name>Mg(2+)</name>
        <dbReference type="ChEBI" id="CHEBI:18420"/>
    </ligand>
</feature>
<feature type="binding site" evidence="1">
    <location>
        <position position="140"/>
    </location>
    <ligand>
        <name>Mg(2+)</name>
        <dbReference type="ChEBI" id="CHEBI:18420"/>
    </ligand>
</feature>
<feature type="binding site" evidence="1">
    <location>
        <begin position="147"/>
        <end position="149"/>
    </location>
    <ligand>
        <name>CTP</name>
        <dbReference type="ChEBI" id="CHEBI:37563"/>
        <note>allosteric inhibitor</note>
    </ligand>
</feature>
<feature type="binding site" evidence="1">
    <location>
        <begin position="187"/>
        <end position="192"/>
    </location>
    <ligand>
        <name>CTP</name>
        <dbReference type="ChEBI" id="CHEBI:37563"/>
        <note>allosteric inhibitor</note>
    </ligand>
</feature>
<feature type="binding site" evidence="1">
    <location>
        <begin position="187"/>
        <end position="192"/>
    </location>
    <ligand>
        <name>UTP</name>
        <dbReference type="ChEBI" id="CHEBI:46398"/>
    </ligand>
</feature>
<feature type="binding site" evidence="1">
    <location>
        <position position="223"/>
    </location>
    <ligand>
        <name>CTP</name>
        <dbReference type="ChEBI" id="CHEBI:37563"/>
        <note>allosteric inhibitor</note>
    </ligand>
</feature>
<feature type="binding site" evidence="1">
    <location>
        <position position="223"/>
    </location>
    <ligand>
        <name>UTP</name>
        <dbReference type="ChEBI" id="CHEBI:46398"/>
    </ligand>
</feature>
<feature type="binding site" evidence="1">
    <location>
        <begin position="239"/>
        <end position="241"/>
    </location>
    <ligand>
        <name>ATP</name>
        <dbReference type="ChEBI" id="CHEBI:30616"/>
    </ligand>
</feature>
<feature type="binding site" evidence="1">
    <location>
        <position position="352"/>
    </location>
    <ligand>
        <name>L-glutamine</name>
        <dbReference type="ChEBI" id="CHEBI:58359"/>
    </ligand>
</feature>
<feature type="binding site" evidence="1">
    <location>
        <begin position="380"/>
        <end position="383"/>
    </location>
    <ligand>
        <name>L-glutamine</name>
        <dbReference type="ChEBI" id="CHEBI:58359"/>
    </ligand>
</feature>
<feature type="binding site" evidence="1">
    <location>
        <position position="403"/>
    </location>
    <ligand>
        <name>L-glutamine</name>
        <dbReference type="ChEBI" id="CHEBI:58359"/>
    </ligand>
</feature>
<feature type="binding site" evidence="1">
    <location>
        <position position="470"/>
    </location>
    <ligand>
        <name>L-glutamine</name>
        <dbReference type="ChEBI" id="CHEBI:58359"/>
    </ligand>
</feature>
<gene>
    <name evidence="1" type="primary">pyrG</name>
    <name type="ordered locus">APJL_0137</name>
</gene>
<comment type="function">
    <text evidence="1">Catalyzes the ATP-dependent amination of UTP to CTP with either L-glutamine or ammonia as the source of nitrogen. Regulates intracellular CTP levels through interactions with the four ribonucleotide triphosphates.</text>
</comment>
<comment type="catalytic activity">
    <reaction evidence="1">
        <text>UTP + L-glutamine + ATP + H2O = CTP + L-glutamate + ADP + phosphate + 2 H(+)</text>
        <dbReference type="Rhea" id="RHEA:26426"/>
        <dbReference type="ChEBI" id="CHEBI:15377"/>
        <dbReference type="ChEBI" id="CHEBI:15378"/>
        <dbReference type="ChEBI" id="CHEBI:29985"/>
        <dbReference type="ChEBI" id="CHEBI:30616"/>
        <dbReference type="ChEBI" id="CHEBI:37563"/>
        <dbReference type="ChEBI" id="CHEBI:43474"/>
        <dbReference type="ChEBI" id="CHEBI:46398"/>
        <dbReference type="ChEBI" id="CHEBI:58359"/>
        <dbReference type="ChEBI" id="CHEBI:456216"/>
        <dbReference type="EC" id="6.3.4.2"/>
    </reaction>
</comment>
<comment type="catalytic activity">
    <reaction evidence="1">
        <text>L-glutamine + H2O = L-glutamate + NH4(+)</text>
        <dbReference type="Rhea" id="RHEA:15889"/>
        <dbReference type="ChEBI" id="CHEBI:15377"/>
        <dbReference type="ChEBI" id="CHEBI:28938"/>
        <dbReference type="ChEBI" id="CHEBI:29985"/>
        <dbReference type="ChEBI" id="CHEBI:58359"/>
    </reaction>
</comment>
<comment type="catalytic activity">
    <reaction evidence="1">
        <text>UTP + NH4(+) + ATP = CTP + ADP + phosphate + 2 H(+)</text>
        <dbReference type="Rhea" id="RHEA:16597"/>
        <dbReference type="ChEBI" id="CHEBI:15378"/>
        <dbReference type="ChEBI" id="CHEBI:28938"/>
        <dbReference type="ChEBI" id="CHEBI:30616"/>
        <dbReference type="ChEBI" id="CHEBI:37563"/>
        <dbReference type="ChEBI" id="CHEBI:43474"/>
        <dbReference type="ChEBI" id="CHEBI:46398"/>
        <dbReference type="ChEBI" id="CHEBI:456216"/>
    </reaction>
</comment>
<comment type="activity regulation">
    <text evidence="1">Allosterically activated by GTP, when glutamine is the substrate; GTP has no effect on the reaction when ammonia is the substrate. The allosteric effector GTP functions by stabilizing the protein conformation that binds the tetrahedral intermediate(s) formed during glutamine hydrolysis. Inhibited by the product CTP, via allosteric rather than competitive inhibition.</text>
</comment>
<comment type="pathway">
    <text evidence="1">Pyrimidine metabolism; CTP biosynthesis via de novo pathway; CTP from UDP: step 2/2.</text>
</comment>
<comment type="subunit">
    <text evidence="1">Homotetramer.</text>
</comment>
<comment type="miscellaneous">
    <text evidence="1">CTPSs have evolved a hybrid strategy for distinguishing between UTP and CTP. The overlapping regions of the product feedback inhibitory and substrate sites recognize a common feature in both compounds, the triphosphate moiety. To differentiate isosteric substrate and product pyrimidine rings, an additional pocket far from the expected kinase/ligase catalytic site, specifically recognizes the cytosine and ribose portions of the product inhibitor.</text>
</comment>
<comment type="similarity">
    <text evidence="1">Belongs to the CTP synthase family.</text>
</comment>
<organism>
    <name type="scientific">Actinobacillus pleuropneumoniae serotype 3 (strain JL03)</name>
    <dbReference type="NCBI Taxonomy" id="434271"/>
    <lineage>
        <taxon>Bacteria</taxon>
        <taxon>Pseudomonadati</taxon>
        <taxon>Pseudomonadota</taxon>
        <taxon>Gammaproteobacteria</taxon>
        <taxon>Pasteurellales</taxon>
        <taxon>Pasteurellaceae</taxon>
        <taxon>Actinobacillus</taxon>
    </lineage>
</organism>
<evidence type="ECO:0000255" key="1">
    <source>
        <dbReference type="HAMAP-Rule" id="MF_01227"/>
    </source>
</evidence>
<proteinExistence type="inferred from homology"/>
<keyword id="KW-0067">ATP-binding</keyword>
<keyword id="KW-0315">Glutamine amidotransferase</keyword>
<keyword id="KW-0436">Ligase</keyword>
<keyword id="KW-0460">Magnesium</keyword>
<keyword id="KW-0479">Metal-binding</keyword>
<keyword id="KW-0547">Nucleotide-binding</keyword>
<keyword id="KW-0665">Pyrimidine biosynthesis</keyword>